<proteinExistence type="evidence at protein level"/>
<organism>
    <name type="scientific">Cyriopagopus hainanus</name>
    <name type="common">Chinese bird spider</name>
    <name type="synonym">Haplopelma hainanum</name>
    <dbReference type="NCBI Taxonomy" id="209901"/>
    <lineage>
        <taxon>Eukaryota</taxon>
        <taxon>Metazoa</taxon>
        <taxon>Ecdysozoa</taxon>
        <taxon>Arthropoda</taxon>
        <taxon>Chelicerata</taxon>
        <taxon>Arachnida</taxon>
        <taxon>Araneae</taxon>
        <taxon>Mygalomorphae</taxon>
        <taxon>Theraphosidae</taxon>
        <taxon>Haplopelma</taxon>
    </lineage>
</organism>
<comment type="function">
    <text evidence="4">Selective antagonist of neuronal tetrodotoxin (TTX)-sensitive voltage-gated sodium channels (IC(50)=1270 nM on Nav1.1/SCN1A, 270 nM on Nav1.2/SCN2A, 491 nM on Nav1.3/SCN3A and 232 nM on Nav1.7/SCN9A). This toxin suppress Nav1.7 current amplitude without significantly altering the activation, inactivation, and repriming kinetics. Short extreme depolarizations partially activate the toxin-bound channel, indicating voltage-dependent inhibition of this toxin. This toxin increases the deactivation of the Nav1.7 current after extreme depolarizations. The toxin-Nav1.7 complex is gradually dissociated upon prolonged strong depolarizations in a voltage-dependent manner, and the unbound toxin rebinds to Nav1.7 after a long repolarization. Moreover, analysis of chimeric channels showed that the DIIS3-S4 linker is critical for toxin binding to Nav1.7. These data are consistent with this toxin interacting with Nav1.7 site 4 and trapping the domain II voltage sensor in the closed state.</text>
</comment>
<comment type="subunit">
    <text evidence="5">Monomer.</text>
</comment>
<comment type="subcellular location">
    <subcellularLocation>
        <location evidence="2 4">Secreted</location>
    </subcellularLocation>
</comment>
<comment type="tissue specificity">
    <text evidence="10 11">Expressed by the venom gland.</text>
</comment>
<comment type="domain">
    <text evidence="4">The presence of a 'disulfide through disulfide knot' structurally defines this protein as a knottin.</text>
</comment>
<comment type="mass spectrometry"/>
<comment type="miscellaneous">
    <text evidence="2 4">Negative results: has no activity on Nav1.4, Nav1.5, Nav1.8 and Nav1.9 sodium and calcium currents.</text>
</comment>
<comment type="similarity">
    <text evidence="9">Belongs to the neurotoxin 10 (Hwtx-1) family. 15 (Hntx-3) subfamily.</text>
</comment>
<comment type="caution">
    <text evidence="9">Several genes are coding for this toxin for which the structure by NMR has been determined. The cross-references to PDB and additional information can be found in entry AC D2Y1X9.</text>
</comment>
<reference key="1">
    <citation type="journal article" date="2010" name="J. Proteome Res.">
        <title>Molecular diversification of peptide toxins from the tarantula Haplopelma hainanum (Ornithoctonus hainana) venom based on transcriptomic, peptidomic, and genomic analyses.</title>
        <authorList>
            <person name="Tang X."/>
            <person name="Zhang Y."/>
            <person name="Hu W."/>
            <person name="Xu D."/>
            <person name="Tao H."/>
            <person name="Yang X."/>
            <person name="Li Y."/>
            <person name="Jiang L."/>
            <person name="Liang S."/>
        </authorList>
    </citation>
    <scope>NUCLEOTIDE SEQUENCE [LARGE SCALE MRNA]</scope>
    <scope>PROTEIN SEQUENCE OF 49-81</scope>
    <scope>IDENTIFICATION BY MASS SPECTROMETRY</scope>
    <source>
        <tissue>Venom</tissue>
        <tissue>Venom gland</tissue>
    </source>
</reference>
<reference key="2">
    <citation type="journal article" date="2003" name="Eur. J. Pharmacol.">
        <title>Inhibition of neuronal tetrodotoxin-sensitive Na+ channels by two spider toxins: hainantoxin-III and hainantoxin-IV.</title>
        <authorList>
            <person name="Xiao Y."/>
            <person name="Liang S."/>
        </authorList>
    </citation>
    <scope>PROTEIN SEQUENCE OF 49-81</scope>
    <scope>FUNCTION</scope>
    <scope>SUBCELLULAR LOCATION</scope>
    <scope>AMIDATION AT LEU-81</scope>
    <source>
        <tissue>Venom</tissue>
    </source>
</reference>
<reference key="3">
    <citation type="submission" date="2002-10" db="UniProtKB">
        <title>Function and solution structure of hainantoxin-III, a potent neuronal TTX-sensitive sodium channel antagonist from Chinese bird spider Selenocosmia hainana.</title>
        <authorList>
            <person name="Zhu Q."/>
            <person name="Liu Z.-H."/>
            <person name="Liang S.-P."/>
        </authorList>
    </citation>
    <scope>SUBUNIT</scope>
    <scope>MASS SPECTROMETRY</scope>
</reference>
<reference key="4">
    <citation type="journal article" date="2013" name="J. Biol. Chem.">
        <title>Structure and function of hainantoxin-III, a selective antagonist of neuronal tetrodotoxin-sensitive voltage-gated sodium channels isolated from the Chinese bird spider Ornithoctonus hainana.</title>
        <authorList>
            <person name="Liu Z."/>
            <person name="Cai T."/>
            <person name="Zhu Q."/>
            <person name="Deng M."/>
            <person name="Li J."/>
            <person name="Zhou X."/>
            <person name="Zhang F."/>
            <person name="Li D."/>
            <person name="Li J."/>
            <person name="Liu Y."/>
            <person name="Hu W."/>
            <person name="Liang S."/>
        </authorList>
    </citation>
    <scope>FUNCTION</scope>
    <scope>SUBCELLULAR LOCATION</scope>
    <scope>STRUCTURE BY NMR OF 49-81</scope>
    <scope>DISULFIDE BONDS</scope>
    <source>
        <tissue>Venom</tissue>
    </source>
</reference>
<reference key="5">
    <citation type="submission" date="2007-07" db="PDB data bank">
        <title>Three dimensional solution structure of hainantoxin-III by 2D 1H-NMR.</title>
        <authorList>
            <person name="Zhu Q."/>
            <person name="Liu Z."/>
            <person name="Liang S."/>
        </authorList>
    </citation>
    <scope>STRUCTURE BY NMR OF 49-81</scope>
    <scope>DISULFIDE BONDS</scope>
</reference>
<dbReference type="EMBL" id="GU292874">
    <property type="protein sequence ID" value="ADB56690.1"/>
    <property type="molecule type" value="mRNA"/>
</dbReference>
<dbReference type="SMR" id="D2Y1Z7"/>
<dbReference type="ArachnoServer" id="AS000339">
    <property type="toxin name" value="mu-theraphotoxin-Hhn2a"/>
</dbReference>
<dbReference type="GO" id="GO:0005576">
    <property type="term" value="C:extracellular region"/>
    <property type="evidence" value="ECO:0007669"/>
    <property type="project" value="UniProtKB-SubCell"/>
</dbReference>
<dbReference type="GO" id="GO:0044231">
    <property type="term" value="C:host cell presynaptic membrane"/>
    <property type="evidence" value="ECO:0007669"/>
    <property type="project" value="UniProtKB-KW"/>
</dbReference>
<dbReference type="GO" id="GO:0008200">
    <property type="term" value="F:ion channel inhibitor activity"/>
    <property type="evidence" value="ECO:0007669"/>
    <property type="project" value="InterPro"/>
</dbReference>
<dbReference type="GO" id="GO:0017080">
    <property type="term" value="F:sodium channel regulator activity"/>
    <property type="evidence" value="ECO:0007669"/>
    <property type="project" value="UniProtKB-KW"/>
</dbReference>
<dbReference type="GO" id="GO:0090729">
    <property type="term" value="F:toxin activity"/>
    <property type="evidence" value="ECO:0007669"/>
    <property type="project" value="UniProtKB-KW"/>
</dbReference>
<dbReference type="InterPro" id="IPR011696">
    <property type="entry name" value="Huwentoxin-1"/>
</dbReference>
<dbReference type="InterPro" id="IPR013140">
    <property type="entry name" value="Huwentoxin_CS1"/>
</dbReference>
<dbReference type="Pfam" id="PF07740">
    <property type="entry name" value="Toxin_12"/>
    <property type="match status" value="1"/>
</dbReference>
<dbReference type="SUPFAM" id="SSF57059">
    <property type="entry name" value="omega toxin-like"/>
    <property type="match status" value="1"/>
</dbReference>
<dbReference type="PROSITE" id="PS60021">
    <property type="entry name" value="HWTX_1"/>
    <property type="match status" value="1"/>
</dbReference>
<evidence type="ECO:0000255" key="1"/>
<evidence type="ECO:0000269" key="2">
    <source>
    </source>
</evidence>
<evidence type="ECO:0000269" key="3">
    <source>
    </source>
</evidence>
<evidence type="ECO:0000269" key="4">
    <source>
    </source>
</evidence>
<evidence type="ECO:0000269" key="5">
    <source ref="3"/>
</evidence>
<evidence type="ECO:0000269" key="6">
    <source ref="5"/>
</evidence>
<evidence type="ECO:0000303" key="7">
    <source>
    </source>
</evidence>
<evidence type="ECO:0000303" key="8">
    <source ref="5"/>
</evidence>
<evidence type="ECO:0000305" key="9"/>
<evidence type="ECO:0000305" key="10">
    <source>
    </source>
</evidence>
<evidence type="ECO:0000305" key="11">
    <source>
    </source>
</evidence>
<feature type="signal peptide" evidence="1">
    <location>
        <begin position="1"/>
        <end position="21"/>
    </location>
</feature>
<feature type="propeptide" id="PRO_0000400516" evidence="2 3">
    <location>
        <begin position="22"/>
        <end position="48"/>
    </location>
</feature>
<feature type="peptide" id="PRO_0000400517" description="Hainantoxin-III 7" evidence="2 3">
    <location>
        <begin position="49"/>
        <end position="81"/>
    </location>
</feature>
<feature type="modified residue" description="Leucine amide" evidence="2">
    <location>
        <position position="81"/>
    </location>
</feature>
<feature type="disulfide bond" evidence="4 6">
    <location>
        <begin position="50"/>
        <end position="65"/>
    </location>
</feature>
<feature type="disulfide bond" evidence="4 6">
    <location>
        <begin position="57"/>
        <end position="70"/>
    </location>
</feature>
<feature type="disulfide bond" evidence="4 6">
    <location>
        <begin position="64"/>
        <end position="77"/>
    </location>
</feature>
<protein>
    <recommendedName>
        <fullName evidence="7 8">Hainantoxin-III 7</fullName>
        <shortName evidence="7 8">HnTx-III</shortName>
    </recommendedName>
    <alternativeName>
        <fullName>Hainantoxin-3.7</fullName>
    </alternativeName>
    <alternativeName>
        <fullName>Mu-theraphotoxin-Hhn2a</fullName>
        <shortName>Mu-TRTX-Hhn2a</shortName>
    </alternativeName>
    <alternativeName>
        <fullName>Peptide F7-18.76</fullName>
    </alternativeName>
</protein>
<sequence>MKASMFLALAGLVLLFVVGYASESEEKEFPRELLSKVFAVDDFKGEERGCKGFGDSCTPGKNECCPNYACSSKHKWCKVYLGK</sequence>
<keyword id="KW-0027">Amidation</keyword>
<keyword id="KW-0903">Direct protein sequencing</keyword>
<keyword id="KW-1015">Disulfide bond</keyword>
<keyword id="KW-0872">Ion channel impairing toxin</keyword>
<keyword id="KW-0960">Knottin</keyword>
<keyword id="KW-0528">Neurotoxin</keyword>
<keyword id="KW-0638">Presynaptic neurotoxin</keyword>
<keyword id="KW-0964">Secreted</keyword>
<keyword id="KW-0732">Signal</keyword>
<keyword id="KW-0800">Toxin</keyword>
<keyword id="KW-0738">Voltage-gated sodium channel impairing toxin</keyword>
<accession>D2Y1Z7</accession>
<accession>P83464</accession>
<name>H3A07_CYRHA</name>